<accession>B6I614</accession>
<dbReference type="EMBL" id="AP009240">
    <property type="protein sequence ID" value="BAG79965.1"/>
    <property type="molecule type" value="Genomic_DNA"/>
</dbReference>
<dbReference type="RefSeq" id="WP_001026276.1">
    <property type="nucleotide sequence ID" value="NC_011415.1"/>
</dbReference>
<dbReference type="SMR" id="B6I614"/>
<dbReference type="KEGG" id="ecy:ECSE_4441"/>
<dbReference type="HOGENOM" id="CLU_132825_1_1_6"/>
<dbReference type="Proteomes" id="UP000008199">
    <property type="component" value="Chromosome"/>
</dbReference>
<dbReference type="GO" id="GO:0005737">
    <property type="term" value="C:cytoplasm"/>
    <property type="evidence" value="ECO:0007669"/>
    <property type="project" value="UniProtKB-SubCell"/>
</dbReference>
<dbReference type="GO" id="GO:0005524">
    <property type="term" value="F:ATP binding"/>
    <property type="evidence" value="ECO:0007669"/>
    <property type="project" value="InterPro"/>
</dbReference>
<dbReference type="GO" id="GO:0046872">
    <property type="term" value="F:metal ion binding"/>
    <property type="evidence" value="ECO:0007669"/>
    <property type="project" value="TreeGrafter"/>
</dbReference>
<dbReference type="GO" id="GO:0044183">
    <property type="term" value="F:protein folding chaperone"/>
    <property type="evidence" value="ECO:0007669"/>
    <property type="project" value="InterPro"/>
</dbReference>
<dbReference type="GO" id="GO:0051087">
    <property type="term" value="F:protein-folding chaperone binding"/>
    <property type="evidence" value="ECO:0007669"/>
    <property type="project" value="TreeGrafter"/>
</dbReference>
<dbReference type="GO" id="GO:0051082">
    <property type="term" value="F:unfolded protein binding"/>
    <property type="evidence" value="ECO:0007669"/>
    <property type="project" value="TreeGrafter"/>
</dbReference>
<dbReference type="GO" id="GO:0051085">
    <property type="term" value="P:chaperone cofactor-dependent protein refolding"/>
    <property type="evidence" value="ECO:0007669"/>
    <property type="project" value="TreeGrafter"/>
</dbReference>
<dbReference type="CDD" id="cd00320">
    <property type="entry name" value="cpn10"/>
    <property type="match status" value="1"/>
</dbReference>
<dbReference type="FunFam" id="2.30.33.40:FF:000001">
    <property type="entry name" value="10 kDa chaperonin"/>
    <property type="match status" value="1"/>
</dbReference>
<dbReference type="Gene3D" id="2.30.33.40">
    <property type="entry name" value="GroES chaperonin"/>
    <property type="match status" value="1"/>
</dbReference>
<dbReference type="HAMAP" id="MF_00580">
    <property type="entry name" value="CH10"/>
    <property type="match status" value="1"/>
</dbReference>
<dbReference type="InterPro" id="IPR020818">
    <property type="entry name" value="Chaperonin_GroES"/>
</dbReference>
<dbReference type="InterPro" id="IPR037124">
    <property type="entry name" value="Chaperonin_GroES_sf"/>
</dbReference>
<dbReference type="InterPro" id="IPR018369">
    <property type="entry name" value="Chaprnonin_Cpn10_CS"/>
</dbReference>
<dbReference type="InterPro" id="IPR011032">
    <property type="entry name" value="GroES-like_sf"/>
</dbReference>
<dbReference type="NCBIfam" id="NF001526">
    <property type="entry name" value="PRK00364.1-1"/>
    <property type="match status" value="1"/>
</dbReference>
<dbReference type="NCBIfam" id="NF001527">
    <property type="entry name" value="PRK00364.1-2"/>
    <property type="match status" value="1"/>
</dbReference>
<dbReference type="NCBIfam" id="NF001531">
    <property type="entry name" value="PRK00364.2-2"/>
    <property type="match status" value="1"/>
</dbReference>
<dbReference type="PANTHER" id="PTHR10772">
    <property type="entry name" value="10 KDA HEAT SHOCK PROTEIN"/>
    <property type="match status" value="1"/>
</dbReference>
<dbReference type="PANTHER" id="PTHR10772:SF58">
    <property type="entry name" value="CO-CHAPERONIN GROES"/>
    <property type="match status" value="1"/>
</dbReference>
<dbReference type="Pfam" id="PF00166">
    <property type="entry name" value="Cpn10"/>
    <property type="match status" value="1"/>
</dbReference>
<dbReference type="PRINTS" id="PR00297">
    <property type="entry name" value="CHAPERONIN10"/>
</dbReference>
<dbReference type="SMART" id="SM00883">
    <property type="entry name" value="Cpn10"/>
    <property type="match status" value="1"/>
</dbReference>
<dbReference type="SUPFAM" id="SSF50129">
    <property type="entry name" value="GroES-like"/>
    <property type="match status" value="1"/>
</dbReference>
<dbReference type="PROSITE" id="PS00681">
    <property type="entry name" value="CHAPERONINS_CPN10"/>
    <property type="match status" value="1"/>
</dbReference>
<keyword id="KW-0143">Chaperone</keyword>
<keyword id="KW-0963">Cytoplasm</keyword>
<comment type="function">
    <text evidence="1">Together with the chaperonin GroEL, plays an essential role in assisting protein folding. The GroEL-GroES system forms a nano-cage that allows encapsulation of the non-native substrate proteins and provides a physical environment optimized to promote and accelerate protein folding. GroES binds to the apical surface of the GroEL ring, thereby capping the opening of the GroEL channel.</text>
</comment>
<comment type="subunit">
    <text evidence="1">Heptamer of 7 subunits arranged in a ring. Interacts with the chaperonin GroEL.</text>
</comment>
<comment type="subcellular location">
    <subcellularLocation>
        <location evidence="1">Cytoplasm</location>
    </subcellularLocation>
</comment>
<comment type="similarity">
    <text evidence="1">Belongs to the GroES chaperonin family.</text>
</comment>
<feature type="chain" id="PRO_1000129657" description="Co-chaperonin GroES">
    <location>
        <begin position="1"/>
        <end position="97"/>
    </location>
</feature>
<organism>
    <name type="scientific">Escherichia coli (strain SE11)</name>
    <dbReference type="NCBI Taxonomy" id="409438"/>
    <lineage>
        <taxon>Bacteria</taxon>
        <taxon>Pseudomonadati</taxon>
        <taxon>Pseudomonadota</taxon>
        <taxon>Gammaproteobacteria</taxon>
        <taxon>Enterobacterales</taxon>
        <taxon>Enterobacteriaceae</taxon>
        <taxon>Escherichia</taxon>
    </lineage>
</organism>
<name>CH10_ECOSE</name>
<reference key="1">
    <citation type="journal article" date="2008" name="DNA Res.">
        <title>Complete genome sequence and comparative analysis of the wild-type commensal Escherichia coli strain SE11 isolated from a healthy adult.</title>
        <authorList>
            <person name="Oshima K."/>
            <person name="Toh H."/>
            <person name="Ogura Y."/>
            <person name="Sasamoto H."/>
            <person name="Morita H."/>
            <person name="Park S.-H."/>
            <person name="Ooka T."/>
            <person name="Iyoda S."/>
            <person name="Taylor T.D."/>
            <person name="Hayashi T."/>
            <person name="Itoh K."/>
            <person name="Hattori M."/>
        </authorList>
    </citation>
    <scope>NUCLEOTIDE SEQUENCE [LARGE SCALE GENOMIC DNA]</scope>
    <source>
        <strain>SE11</strain>
    </source>
</reference>
<protein>
    <recommendedName>
        <fullName evidence="1">Co-chaperonin GroES</fullName>
    </recommendedName>
    <alternativeName>
        <fullName evidence="1">10 kDa chaperonin</fullName>
    </alternativeName>
    <alternativeName>
        <fullName evidence="1">Chaperonin-10</fullName>
        <shortName evidence="1">Cpn10</shortName>
    </alternativeName>
</protein>
<evidence type="ECO:0000255" key="1">
    <source>
        <dbReference type="HAMAP-Rule" id="MF_00580"/>
    </source>
</evidence>
<gene>
    <name evidence="1" type="primary">groES</name>
    <name evidence="1" type="synonym">groS</name>
    <name type="ordered locus">ECSE_4441</name>
</gene>
<sequence>MNIRPLHDRVIVKRKEVETKSAGGIVLTGSAAAKSTRGEVLAVGNGRILENGEVKPLDVKVGDIVIFNDGYGVKSEKIDNEEVLIMSESDILAIVEA</sequence>
<proteinExistence type="inferred from homology"/>